<keyword id="KW-0687">Ribonucleoprotein</keyword>
<keyword id="KW-0689">Ribosomal protein</keyword>
<keyword id="KW-0694">RNA-binding</keyword>
<keyword id="KW-0699">rRNA-binding</keyword>
<organism>
    <name type="scientific">Helicobacter pylori (strain HPAG1)</name>
    <dbReference type="NCBI Taxonomy" id="357544"/>
    <lineage>
        <taxon>Bacteria</taxon>
        <taxon>Pseudomonadati</taxon>
        <taxon>Campylobacterota</taxon>
        <taxon>Epsilonproteobacteria</taxon>
        <taxon>Campylobacterales</taxon>
        <taxon>Helicobacteraceae</taxon>
        <taxon>Helicobacter</taxon>
    </lineage>
</organism>
<gene>
    <name evidence="1" type="primary">rplR</name>
    <name type="ordered locus">HPAG1_1248</name>
</gene>
<evidence type="ECO:0000255" key="1">
    <source>
        <dbReference type="HAMAP-Rule" id="MF_01337"/>
    </source>
</evidence>
<evidence type="ECO:0000305" key="2"/>
<protein>
    <recommendedName>
        <fullName evidence="1">Large ribosomal subunit protein uL18</fullName>
    </recommendedName>
    <alternativeName>
        <fullName evidence="2">50S ribosomal protein L18</fullName>
    </alternativeName>
</protein>
<dbReference type="EMBL" id="CP000241">
    <property type="protein sequence ID" value="ABF85315.1"/>
    <property type="molecule type" value="Genomic_DNA"/>
</dbReference>
<dbReference type="SMR" id="Q1CRV7"/>
<dbReference type="KEGG" id="hpa:HPAG1_1248"/>
<dbReference type="HOGENOM" id="CLU_098841_0_1_7"/>
<dbReference type="GO" id="GO:0022625">
    <property type="term" value="C:cytosolic large ribosomal subunit"/>
    <property type="evidence" value="ECO:0007669"/>
    <property type="project" value="TreeGrafter"/>
</dbReference>
<dbReference type="GO" id="GO:0008097">
    <property type="term" value="F:5S rRNA binding"/>
    <property type="evidence" value="ECO:0007669"/>
    <property type="project" value="TreeGrafter"/>
</dbReference>
<dbReference type="GO" id="GO:0003735">
    <property type="term" value="F:structural constituent of ribosome"/>
    <property type="evidence" value="ECO:0007669"/>
    <property type="project" value="InterPro"/>
</dbReference>
<dbReference type="GO" id="GO:0006412">
    <property type="term" value="P:translation"/>
    <property type="evidence" value="ECO:0007669"/>
    <property type="project" value="UniProtKB-UniRule"/>
</dbReference>
<dbReference type="CDD" id="cd00432">
    <property type="entry name" value="Ribosomal_L18_L5e"/>
    <property type="match status" value="1"/>
</dbReference>
<dbReference type="Gene3D" id="3.30.420.100">
    <property type="match status" value="1"/>
</dbReference>
<dbReference type="HAMAP" id="MF_01337_B">
    <property type="entry name" value="Ribosomal_uL18_B"/>
    <property type="match status" value="1"/>
</dbReference>
<dbReference type="InterPro" id="IPR004389">
    <property type="entry name" value="Ribosomal_uL18_bac-type"/>
</dbReference>
<dbReference type="InterPro" id="IPR005484">
    <property type="entry name" value="Ribosomal_uL18_bac/euk"/>
</dbReference>
<dbReference type="NCBIfam" id="TIGR00060">
    <property type="entry name" value="L18_bact"/>
    <property type="match status" value="1"/>
</dbReference>
<dbReference type="PANTHER" id="PTHR12899">
    <property type="entry name" value="39S RIBOSOMAL PROTEIN L18, MITOCHONDRIAL"/>
    <property type="match status" value="1"/>
</dbReference>
<dbReference type="PANTHER" id="PTHR12899:SF3">
    <property type="entry name" value="LARGE RIBOSOMAL SUBUNIT PROTEIN UL18M"/>
    <property type="match status" value="1"/>
</dbReference>
<dbReference type="Pfam" id="PF00861">
    <property type="entry name" value="Ribosomal_L18p"/>
    <property type="match status" value="1"/>
</dbReference>
<dbReference type="SUPFAM" id="SSF53137">
    <property type="entry name" value="Translational machinery components"/>
    <property type="match status" value="1"/>
</dbReference>
<name>RL18_HELPH</name>
<reference key="1">
    <citation type="journal article" date="2006" name="Proc. Natl. Acad. Sci. U.S.A.">
        <title>The complete genome sequence of a chronic atrophic gastritis Helicobacter pylori strain: evolution during disease progression.</title>
        <authorList>
            <person name="Oh J.D."/>
            <person name="Kling-Baeckhed H."/>
            <person name="Giannakis M."/>
            <person name="Xu J."/>
            <person name="Fulton R.S."/>
            <person name="Fulton L.A."/>
            <person name="Cordum H.S."/>
            <person name="Wang C."/>
            <person name="Elliott G."/>
            <person name="Edwards J."/>
            <person name="Mardis E.R."/>
            <person name="Engstrand L.G."/>
            <person name="Gordon J.I."/>
        </authorList>
    </citation>
    <scope>NUCLEOTIDE SEQUENCE [LARGE SCALE GENOMIC DNA]</scope>
    <source>
        <strain>HPAG1</strain>
    </source>
</reference>
<proteinExistence type="inferred from homology"/>
<accession>Q1CRV7</accession>
<comment type="function">
    <text evidence="1">This is one of the proteins that bind and probably mediate the attachment of the 5S RNA into the large ribosomal subunit, where it forms part of the central protuberance.</text>
</comment>
<comment type="subunit">
    <text evidence="1">Part of the 50S ribosomal subunit; part of the 5S rRNA/L5/L18/L25 subcomplex. Contacts the 5S and 23S rRNAs.</text>
</comment>
<comment type="similarity">
    <text evidence="1">Belongs to the universal ribosomal protein uL18 family.</text>
</comment>
<feature type="chain" id="PRO_0000251319" description="Large ribosomal subunit protein uL18">
    <location>
        <begin position="1"/>
        <end position="119"/>
    </location>
</feature>
<sequence>MMNAKALYKKKALRDRRKLRIKSKLLGDALRPRVSVFRSNRYFYAQAIDDVKQSTITHIDGRKMGFKNTQEDAKKLGALFAEELKKAGIERAVYDRNGYLYHGVVAAFAESLRENGIAL</sequence>